<gene>
    <name evidence="1" type="primary">rpmH</name>
    <name type="ordered locus">Bcen_2552</name>
</gene>
<reference key="1">
    <citation type="submission" date="2006-05" db="EMBL/GenBank/DDBJ databases">
        <title>Complete sequence of chromosome 1 of Burkholderia cenocepacia AU 1054.</title>
        <authorList>
            <consortium name="US DOE Joint Genome Institute"/>
            <person name="Copeland A."/>
            <person name="Lucas S."/>
            <person name="Lapidus A."/>
            <person name="Barry K."/>
            <person name="Detter J.C."/>
            <person name="Glavina del Rio T."/>
            <person name="Hammon N."/>
            <person name="Israni S."/>
            <person name="Dalin E."/>
            <person name="Tice H."/>
            <person name="Pitluck S."/>
            <person name="Chain P."/>
            <person name="Malfatti S."/>
            <person name="Shin M."/>
            <person name="Vergez L."/>
            <person name="Schmutz J."/>
            <person name="Larimer F."/>
            <person name="Land M."/>
            <person name="Hauser L."/>
            <person name="Kyrpides N."/>
            <person name="Lykidis A."/>
            <person name="LiPuma J.J."/>
            <person name="Konstantinidis K."/>
            <person name="Tiedje J.M."/>
            <person name="Richardson P."/>
        </authorList>
    </citation>
    <scope>NUCLEOTIDE SEQUENCE [LARGE SCALE GENOMIC DNA]</scope>
    <source>
        <strain>AU 1054</strain>
    </source>
</reference>
<keyword id="KW-0687">Ribonucleoprotein</keyword>
<keyword id="KW-0689">Ribosomal protein</keyword>
<dbReference type="EMBL" id="CP000378">
    <property type="protein sequence ID" value="ABF77451.1"/>
    <property type="molecule type" value="Genomic_DNA"/>
</dbReference>
<dbReference type="SMR" id="Q1BSF4"/>
<dbReference type="HOGENOM" id="CLU_129938_2_0_4"/>
<dbReference type="GO" id="GO:1990904">
    <property type="term" value="C:ribonucleoprotein complex"/>
    <property type="evidence" value="ECO:0007669"/>
    <property type="project" value="UniProtKB-KW"/>
</dbReference>
<dbReference type="GO" id="GO:0005840">
    <property type="term" value="C:ribosome"/>
    <property type="evidence" value="ECO:0007669"/>
    <property type="project" value="UniProtKB-KW"/>
</dbReference>
<dbReference type="GO" id="GO:0003735">
    <property type="term" value="F:structural constituent of ribosome"/>
    <property type="evidence" value="ECO:0007669"/>
    <property type="project" value="InterPro"/>
</dbReference>
<dbReference type="GO" id="GO:0006412">
    <property type="term" value="P:translation"/>
    <property type="evidence" value="ECO:0007669"/>
    <property type="project" value="UniProtKB-UniRule"/>
</dbReference>
<dbReference type="FunFam" id="1.10.287.3980:FF:000001">
    <property type="entry name" value="Mitochondrial ribosomal protein L34"/>
    <property type="match status" value="1"/>
</dbReference>
<dbReference type="Gene3D" id="1.10.287.3980">
    <property type="match status" value="1"/>
</dbReference>
<dbReference type="HAMAP" id="MF_00391">
    <property type="entry name" value="Ribosomal_bL34"/>
    <property type="match status" value="1"/>
</dbReference>
<dbReference type="InterPro" id="IPR000271">
    <property type="entry name" value="Ribosomal_bL34"/>
</dbReference>
<dbReference type="InterPro" id="IPR020939">
    <property type="entry name" value="Ribosomal_bL34_CS"/>
</dbReference>
<dbReference type="NCBIfam" id="TIGR01030">
    <property type="entry name" value="rpmH_bact"/>
    <property type="match status" value="1"/>
</dbReference>
<dbReference type="PANTHER" id="PTHR14503:SF4">
    <property type="entry name" value="LARGE RIBOSOMAL SUBUNIT PROTEIN BL34M"/>
    <property type="match status" value="1"/>
</dbReference>
<dbReference type="PANTHER" id="PTHR14503">
    <property type="entry name" value="MITOCHONDRIAL RIBOSOMAL PROTEIN 34 FAMILY MEMBER"/>
    <property type="match status" value="1"/>
</dbReference>
<dbReference type="Pfam" id="PF00468">
    <property type="entry name" value="Ribosomal_L34"/>
    <property type="match status" value="1"/>
</dbReference>
<dbReference type="PROSITE" id="PS00784">
    <property type="entry name" value="RIBOSOMAL_L34"/>
    <property type="match status" value="1"/>
</dbReference>
<protein>
    <recommendedName>
        <fullName evidence="1">Large ribosomal subunit protein bL34</fullName>
    </recommendedName>
    <alternativeName>
        <fullName evidence="2">50S ribosomal protein L34</fullName>
    </alternativeName>
</protein>
<evidence type="ECO:0000255" key="1">
    <source>
        <dbReference type="HAMAP-Rule" id="MF_00391"/>
    </source>
</evidence>
<evidence type="ECO:0000305" key="2"/>
<accession>Q1BSF4</accession>
<name>RL34_BURO1</name>
<sequence>MKRTYQPSVTRRKRTHGFRVRMKTAGGRKVINARRAKGRKRLAI</sequence>
<organism>
    <name type="scientific">Burkholderia orbicola (strain AU 1054)</name>
    <dbReference type="NCBI Taxonomy" id="331271"/>
    <lineage>
        <taxon>Bacteria</taxon>
        <taxon>Pseudomonadati</taxon>
        <taxon>Pseudomonadota</taxon>
        <taxon>Betaproteobacteria</taxon>
        <taxon>Burkholderiales</taxon>
        <taxon>Burkholderiaceae</taxon>
        <taxon>Burkholderia</taxon>
        <taxon>Burkholderia cepacia complex</taxon>
        <taxon>Burkholderia orbicola</taxon>
    </lineage>
</organism>
<feature type="chain" id="PRO_1000013293" description="Large ribosomal subunit protein bL34">
    <location>
        <begin position="1"/>
        <end position="44"/>
    </location>
</feature>
<proteinExistence type="inferred from homology"/>
<comment type="similarity">
    <text evidence="1">Belongs to the bacterial ribosomal protein bL34 family.</text>
</comment>